<organism>
    <name type="scientific">Bartonella tribocorum (strain CIP 105476 / IBS 506)</name>
    <dbReference type="NCBI Taxonomy" id="382640"/>
    <lineage>
        <taxon>Bacteria</taxon>
        <taxon>Pseudomonadati</taxon>
        <taxon>Pseudomonadota</taxon>
        <taxon>Alphaproteobacteria</taxon>
        <taxon>Hyphomicrobiales</taxon>
        <taxon>Bartonellaceae</taxon>
        <taxon>Bartonella</taxon>
    </lineage>
</organism>
<reference key="1">
    <citation type="journal article" date="2007" name="Nat. Genet.">
        <title>Genomic analysis of Bartonella identifies type IV secretion systems as host adaptability factors.</title>
        <authorList>
            <person name="Saenz H.L."/>
            <person name="Engel P."/>
            <person name="Stoeckli M.C."/>
            <person name="Lanz C."/>
            <person name="Raddatz G."/>
            <person name="Vayssier-Taussat M."/>
            <person name="Birtles R."/>
            <person name="Schuster S.C."/>
            <person name="Dehio C."/>
        </authorList>
    </citation>
    <scope>NUCLEOTIDE SEQUENCE [LARGE SCALE GENOMIC DNA]</scope>
    <source>
        <strain>CIP 105476 / IBS 506</strain>
    </source>
</reference>
<feature type="chain" id="PRO_1000075726" description="Ribonuclease 3">
    <location>
        <begin position="1"/>
        <end position="235"/>
    </location>
</feature>
<feature type="domain" description="RNase III" evidence="1">
    <location>
        <begin position="6"/>
        <end position="131"/>
    </location>
</feature>
<feature type="domain" description="DRBM" evidence="1">
    <location>
        <begin position="156"/>
        <end position="225"/>
    </location>
</feature>
<feature type="active site" evidence="1">
    <location>
        <position position="48"/>
    </location>
</feature>
<feature type="active site" evidence="1">
    <location>
        <position position="120"/>
    </location>
</feature>
<feature type="binding site" evidence="1">
    <location>
        <position position="44"/>
    </location>
    <ligand>
        <name>Mg(2+)</name>
        <dbReference type="ChEBI" id="CHEBI:18420"/>
    </ligand>
</feature>
<feature type="binding site" evidence="1">
    <location>
        <position position="117"/>
    </location>
    <ligand>
        <name>Mg(2+)</name>
        <dbReference type="ChEBI" id="CHEBI:18420"/>
    </ligand>
</feature>
<feature type="binding site" evidence="1">
    <location>
        <position position="120"/>
    </location>
    <ligand>
        <name>Mg(2+)</name>
        <dbReference type="ChEBI" id="CHEBI:18420"/>
    </ligand>
</feature>
<name>RNC_BART1</name>
<comment type="function">
    <text evidence="1">Digests double-stranded RNA. Involved in the processing of primary rRNA transcript to yield the immediate precursors to the large and small rRNAs (23S and 16S). Processes some mRNAs, and tRNAs when they are encoded in the rRNA operon. Processes pre-crRNA and tracrRNA of type II CRISPR loci if present in the organism.</text>
</comment>
<comment type="catalytic activity">
    <reaction evidence="1">
        <text>Endonucleolytic cleavage to 5'-phosphomonoester.</text>
        <dbReference type="EC" id="3.1.26.3"/>
    </reaction>
</comment>
<comment type="cofactor">
    <cofactor evidence="1">
        <name>Mg(2+)</name>
        <dbReference type="ChEBI" id="CHEBI:18420"/>
    </cofactor>
</comment>
<comment type="subunit">
    <text evidence="1">Homodimer.</text>
</comment>
<comment type="subcellular location">
    <subcellularLocation>
        <location evidence="1">Cytoplasm</location>
    </subcellularLocation>
</comment>
<comment type="similarity">
    <text evidence="1">Belongs to the ribonuclease III family.</text>
</comment>
<accession>A9IRN0</accession>
<sequence length="235" mass="27108">MRRLMIDQLFKLTGHRFKDEEKLKRALTHASVQDSEQGNYERLEFLGDRVLGLLIAEMLYQLFPQASEGELSVRLNHLVNAQTCADIAREMRLPDMIQVGFEMRNFEGRRLINMHADVVEALIAVMYLDGGLESVRPFIQKYWQSRAKKMDAGRRDAKTELQEWAHIQGDAQPHYQVIKRSGPDHDPVFMVEVSISGFASEIGQGSSKRNAERMAAEKILRREGVWKTVEKNDYE</sequence>
<keyword id="KW-0963">Cytoplasm</keyword>
<keyword id="KW-0255">Endonuclease</keyword>
<keyword id="KW-0378">Hydrolase</keyword>
<keyword id="KW-0460">Magnesium</keyword>
<keyword id="KW-0479">Metal-binding</keyword>
<keyword id="KW-0507">mRNA processing</keyword>
<keyword id="KW-0540">Nuclease</keyword>
<keyword id="KW-0694">RNA-binding</keyword>
<keyword id="KW-0698">rRNA processing</keyword>
<keyword id="KW-0699">rRNA-binding</keyword>
<keyword id="KW-0819">tRNA processing</keyword>
<gene>
    <name evidence="1" type="primary">rnc</name>
    <name type="ordered locus">BT_0786</name>
</gene>
<dbReference type="EC" id="3.1.26.3" evidence="1"/>
<dbReference type="EMBL" id="AM260525">
    <property type="protein sequence ID" value="CAK01201.1"/>
    <property type="molecule type" value="Genomic_DNA"/>
</dbReference>
<dbReference type="RefSeq" id="WP_012231314.1">
    <property type="nucleotide sequence ID" value="NC_010161.1"/>
</dbReference>
<dbReference type="SMR" id="A9IRN0"/>
<dbReference type="KEGG" id="btr:BT_0786"/>
<dbReference type="eggNOG" id="COG0571">
    <property type="taxonomic scope" value="Bacteria"/>
</dbReference>
<dbReference type="HOGENOM" id="CLU_000907_1_1_5"/>
<dbReference type="Proteomes" id="UP000001592">
    <property type="component" value="Chromosome"/>
</dbReference>
<dbReference type="GO" id="GO:0005737">
    <property type="term" value="C:cytoplasm"/>
    <property type="evidence" value="ECO:0007669"/>
    <property type="project" value="UniProtKB-SubCell"/>
</dbReference>
<dbReference type="GO" id="GO:0003725">
    <property type="term" value="F:double-stranded RNA binding"/>
    <property type="evidence" value="ECO:0007669"/>
    <property type="project" value="TreeGrafter"/>
</dbReference>
<dbReference type="GO" id="GO:0046872">
    <property type="term" value="F:metal ion binding"/>
    <property type="evidence" value="ECO:0007669"/>
    <property type="project" value="UniProtKB-KW"/>
</dbReference>
<dbReference type="GO" id="GO:0004525">
    <property type="term" value="F:ribonuclease III activity"/>
    <property type="evidence" value="ECO:0007669"/>
    <property type="project" value="UniProtKB-UniRule"/>
</dbReference>
<dbReference type="GO" id="GO:0019843">
    <property type="term" value="F:rRNA binding"/>
    <property type="evidence" value="ECO:0007669"/>
    <property type="project" value="UniProtKB-KW"/>
</dbReference>
<dbReference type="GO" id="GO:0006397">
    <property type="term" value="P:mRNA processing"/>
    <property type="evidence" value="ECO:0007669"/>
    <property type="project" value="UniProtKB-UniRule"/>
</dbReference>
<dbReference type="GO" id="GO:0010468">
    <property type="term" value="P:regulation of gene expression"/>
    <property type="evidence" value="ECO:0007669"/>
    <property type="project" value="TreeGrafter"/>
</dbReference>
<dbReference type="GO" id="GO:0006364">
    <property type="term" value="P:rRNA processing"/>
    <property type="evidence" value="ECO:0007669"/>
    <property type="project" value="UniProtKB-UniRule"/>
</dbReference>
<dbReference type="GO" id="GO:0008033">
    <property type="term" value="P:tRNA processing"/>
    <property type="evidence" value="ECO:0007669"/>
    <property type="project" value="UniProtKB-KW"/>
</dbReference>
<dbReference type="CDD" id="cd10845">
    <property type="entry name" value="DSRM_RNAse_III_family"/>
    <property type="match status" value="1"/>
</dbReference>
<dbReference type="CDD" id="cd00593">
    <property type="entry name" value="RIBOc"/>
    <property type="match status" value="1"/>
</dbReference>
<dbReference type="FunFam" id="1.10.1520.10:FF:000001">
    <property type="entry name" value="Ribonuclease 3"/>
    <property type="match status" value="1"/>
</dbReference>
<dbReference type="FunFam" id="3.30.160.20:FF:000003">
    <property type="entry name" value="Ribonuclease 3"/>
    <property type="match status" value="1"/>
</dbReference>
<dbReference type="Gene3D" id="3.30.160.20">
    <property type="match status" value="1"/>
</dbReference>
<dbReference type="Gene3D" id="1.10.1520.10">
    <property type="entry name" value="Ribonuclease III domain"/>
    <property type="match status" value="1"/>
</dbReference>
<dbReference type="HAMAP" id="MF_00104">
    <property type="entry name" value="RNase_III"/>
    <property type="match status" value="1"/>
</dbReference>
<dbReference type="InterPro" id="IPR014720">
    <property type="entry name" value="dsRBD_dom"/>
</dbReference>
<dbReference type="InterPro" id="IPR011907">
    <property type="entry name" value="RNase_III"/>
</dbReference>
<dbReference type="InterPro" id="IPR000999">
    <property type="entry name" value="RNase_III_dom"/>
</dbReference>
<dbReference type="InterPro" id="IPR036389">
    <property type="entry name" value="RNase_III_sf"/>
</dbReference>
<dbReference type="NCBIfam" id="TIGR02191">
    <property type="entry name" value="RNaseIII"/>
    <property type="match status" value="1"/>
</dbReference>
<dbReference type="PANTHER" id="PTHR11207:SF0">
    <property type="entry name" value="RIBONUCLEASE 3"/>
    <property type="match status" value="1"/>
</dbReference>
<dbReference type="PANTHER" id="PTHR11207">
    <property type="entry name" value="RIBONUCLEASE III"/>
    <property type="match status" value="1"/>
</dbReference>
<dbReference type="Pfam" id="PF00035">
    <property type="entry name" value="dsrm"/>
    <property type="match status" value="1"/>
</dbReference>
<dbReference type="Pfam" id="PF14622">
    <property type="entry name" value="Ribonucleas_3_3"/>
    <property type="match status" value="1"/>
</dbReference>
<dbReference type="SMART" id="SM00358">
    <property type="entry name" value="DSRM"/>
    <property type="match status" value="1"/>
</dbReference>
<dbReference type="SMART" id="SM00535">
    <property type="entry name" value="RIBOc"/>
    <property type="match status" value="1"/>
</dbReference>
<dbReference type="SUPFAM" id="SSF54768">
    <property type="entry name" value="dsRNA-binding domain-like"/>
    <property type="match status" value="1"/>
</dbReference>
<dbReference type="SUPFAM" id="SSF69065">
    <property type="entry name" value="RNase III domain-like"/>
    <property type="match status" value="1"/>
</dbReference>
<dbReference type="PROSITE" id="PS50137">
    <property type="entry name" value="DS_RBD"/>
    <property type="match status" value="1"/>
</dbReference>
<dbReference type="PROSITE" id="PS00517">
    <property type="entry name" value="RNASE_3_1"/>
    <property type="match status" value="1"/>
</dbReference>
<dbReference type="PROSITE" id="PS50142">
    <property type="entry name" value="RNASE_3_2"/>
    <property type="match status" value="1"/>
</dbReference>
<evidence type="ECO:0000255" key="1">
    <source>
        <dbReference type="HAMAP-Rule" id="MF_00104"/>
    </source>
</evidence>
<proteinExistence type="inferred from homology"/>
<protein>
    <recommendedName>
        <fullName evidence="1">Ribonuclease 3</fullName>
        <ecNumber evidence="1">3.1.26.3</ecNumber>
    </recommendedName>
    <alternativeName>
        <fullName evidence="1">Ribonuclease III</fullName>
        <shortName evidence="1">RNase III</shortName>
    </alternativeName>
</protein>